<protein>
    <recommendedName>
        <fullName>D-glycero-D-manno-heptose-1,7-bisphosphate 7-phosphatase</fullName>
        <ecNumber>3.1.3.-</ecNumber>
    </recommendedName>
    <alternativeName>
        <fullName>D,D-heptose 1,7-bisphosphate phosphatase</fullName>
        <shortName>HBP phosphatase</shortName>
    </alternativeName>
</protein>
<proteinExistence type="inferred from homology"/>
<keyword id="KW-0119">Carbohydrate metabolism</keyword>
<keyword id="KW-0963">Cytoplasm</keyword>
<keyword id="KW-0378">Hydrolase</keyword>
<keyword id="KW-0460">Magnesium</keyword>
<keyword id="KW-0479">Metal-binding</keyword>
<keyword id="KW-1185">Reference proteome</keyword>
<keyword id="KW-0862">Zinc</keyword>
<accession>Q8KAY7</accession>
<name>GMHB_CHLTE</name>
<evidence type="ECO:0000250" key="1"/>
<evidence type="ECO:0000305" key="2"/>
<organism>
    <name type="scientific">Chlorobaculum tepidum (strain ATCC 49652 / DSM 12025 / NBRC 103806 / TLS)</name>
    <name type="common">Chlorobium tepidum</name>
    <dbReference type="NCBI Taxonomy" id="194439"/>
    <lineage>
        <taxon>Bacteria</taxon>
        <taxon>Pseudomonadati</taxon>
        <taxon>Chlorobiota</taxon>
        <taxon>Chlorobiia</taxon>
        <taxon>Chlorobiales</taxon>
        <taxon>Chlorobiaceae</taxon>
        <taxon>Chlorobaculum</taxon>
    </lineage>
</organism>
<dbReference type="EC" id="3.1.3.-"/>
<dbReference type="EMBL" id="AE006470">
    <property type="protein sequence ID" value="AAM73229.1"/>
    <property type="molecule type" value="Genomic_DNA"/>
</dbReference>
<dbReference type="RefSeq" id="NP_662887.1">
    <property type="nucleotide sequence ID" value="NC_002932.3"/>
</dbReference>
<dbReference type="RefSeq" id="WP_010933667.1">
    <property type="nucleotide sequence ID" value="NC_002932.3"/>
</dbReference>
<dbReference type="SMR" id="Q8KAY7"/>
<dbReference type="STRING" id="194439.CT2011"/>
<dbReference type="EnsemblBacteria" id="AAM73229">
    <property type="protein sequence ID" value="AAM73229"/>
    <property type="gene ID" value="CT2011"/>
</dbReference>
<dbReference type="KEGG" id="cte:CT2011"/>
<dbReference type="PATRIC" id="fig|194439.7.peg.1822"/>
<dbReference type="eggNOG" id="COG0241">
    <property type="taxonomic scope" value="Bacteria"/>
</dbReference>
<dbReference type="HOGENOM" id="CLU_085077_3_2_10"/>
<dbReference type="OrthoDB" id="9803871at2"/>
<dbReference type="Proteomes" id="UP000001007">
    <property type="component" value="Chromosome"/>
</dbReference>
<dbReference type="GO" id="GO:0005737">
    <property type="term" value="C:cytoplasm"/>
    <property type="evidence" value="ECO:0007669"/>
    <property type="project" value="UniProtKB-SubCell"/>
</dbReference>
<dbReference type="GO" id="GO:0034200">
    <property type="term" value="F:D-glycero-beta-D-manno-heptose 1,7-bisphosphate 7-phosphatase activity"/>
    <property type="evidence" value="ECO:0000250"/>
    <property type="project" value="UniProtKB"/>
</dbReference>
<dbReference type="GO" id="GO:0000287">
    <property type="term" value="F:magnesium ion binding"/>
    <property type="evidence" value="ECO:0000250"/>
    <property type="project" value="UniProtKB"/>
</dbReference>
<dbReference type="GO" id="GO:0008270">
    <property type="term" value="F:zinc ion binding"/>
    <property type="evidence" value="ECO:0000250"/>
    <property type="project" value="UniProtKB"/>
</dbReference>
<dbReference type="GO" id="GO:0005975">
    <property type="term" value="P:carbohydrate metabolic process"/>
    <property type="evidence" value="ECO:0007669"/>
    <property type="project" value="InterPro"/>
</dbReference>
<dbReference type="CDD" id="cd07503">
    <property type="entry name" value="HAD_HisB-N"/>
    <property type="match status" value="1"/>
</dbReference>
<dbReference type="FunFam" id="3.40.50.1000:FF:000037">
    <property type="entry name" value="D,D-heptose 1,7-bisphosphate phosphatase"/>
    <property type="match status" value="1"/>
</dbReference>
<dbReference type="Gene3D" id="3.40.50.1000">
    <property type="entry name" value="HAD superfamily/HAD-like"/>
    <property type="match status" value="1"/>
</dbReference>
<dbReference type="InterPro" id="IPR036412">
    <property type="entry name" value="HAD-like_sf"/>
</dbReference>
<dbReference type="InterPro" id="IPR006549">
    <property type="entry name" value="HAD-SF_hydro_IIIA"/>
</dbReference>
<dbReference type="InterPro" id="IPR023214">
    <property type="entry name" value="HAD_sf"/>
</dbReference>
<dbReference type="InterPro" id="IPR004446">
    <property type="entry name" value="Heptose_bisP_phosphatase"/>
</dbReference>
<dbReference type="InterPro" id="IPR006543">
    <property type="entry name" value="Histidinol-phos"/>
</dbReference>
<dbReference type="NCBIfam" id="TIGR01662">
    <property type="entry name" value="HAD-SF-IIIA"/>
    <property type="match status" value="1"/>
</dbReference>
<dbReference type="NCBIfam" id="TIGR01656">
    <property type="entry name" value="Histidinol-ppas"/>
    <property type="match status" value="1"/>
</dbReference>
<dbReference type="PANTHER" id="PTHR42891">
    <property type="entry name" value="D-GLYCERO-BETA-D-MANNO-HEPTOSE-1,7-BISPHOSPHATE 7-PHOSPHATASE"/>
    <property type="match status" value="1"/>
</dbReference>
<dbReference type="PANTHER" id="PTHR42891:SF1">
    <property type="entry name" value="D-GLYCERO-BETA-D-MANNO-HEPTOSE-1,7-BISPHOSPHATE 7-PHOSPHATASE"/>
    <property type="match status" value="1"/>
</dbReference>
<dbReference type="Pfam" id="PF13242">
    <property type="entry name" value="Hydrolase_like"/>
    <property type="match status" value="1"/>
</dbReference>
<dbReference type="PIRSF" id="PIRSF004682">
    <property type="entry name" value="GmhB"/>
    <property type="match status" value="1"/>
</dbReference>
<dbReference type="SUPFAM" id="SSF56784">
    <property type="entry name" value="HAD-like"/>
    <property type="match status" value="1"/>
</dbReference>
<comment type="function">
    <text evidence="1">Converts the D-glycero-D-manno-heptose 1,7-bisphosphate intermediate into D-glycero-D-manno-heptose 1-phosphate by removing the phosphate group at the C-7 position.</text>
</comment>
<comment type="catalytic activity">
    <reaction>
        <text>D-glycero-D-manno-heptose 1,7-bisphosphate + H2O = D-glycero-D-manno-heptose 1-phosphate + phosphate</text>
        <dbReference type="Rhea" id="RHEA:48504"/>
        <dbReference type="ChEBI" id="CHEBI:15377"/>
        <dbReference type="ChEBI" id="CHEBI:43474"/>
        <dbReference type="ChEBI" id="CHEBI:59957"/>
        <dbReference type="ChEBI" id="CHEBI:60002"/>
    </reaction>
</comment>
<comment type="cofactor">
    <cofactor evidence="1">
        <name>Mg(2+)</name>
        <dbReference type="ChEBI" id="CHEBI:18420"/>
    </cofactor>
</comment>
<comment type="cofactor">
    <cofactor evidence="1">
        <name>Zn(2+)</name>
        <dbReference type="ChEBI" id="CHEBI:29105"/>
    </cofactor>
</comment>
<comment type="subunit">
    <text evidence="1">Monomer.</text>
</comment>
<comment type="subcellular location">
    <subcellularLocation>
        <location evidence="1">Cytoplasm</location>
    </subcellularLocation>
</comment>
<comment type="similarity">
    <text evidence="2">Belongs to the GmhB family.</text>
</comment>
<reference key="1">
    <citation type="journal article" date="2002" name="Proc. Natl. Acad. Sci. U.S.A.">
        <title>The complete genome sequence of Chlorobium tepidum TLS, a photosynthetic, anaerobic, green-sulfur bacterium.</title>
        <authorList>
            <person name="Eisen J.A."/>
            <person name="Nelson K.E."/>
            <person name="Paulsen I.T."/>
            <person name="Heidelberg J.F."/>
            <person name="Wu M."/>
            <person name="Dodson R.J."/>
            <person name="DeBoy R.T."/>
            <person name="Gwinn M.L."/>
            <person name="Nelson W.C."/>
            <person name="Haft D.H."/>
            <person name="Hickey E.K."/>
            <person name="Peterson J.D."/>
            <person name="Durkin A.S."/>
            <person name="Kolonay J.F."/>
            <person name="Yang F."/>
            <person name="Holt I.E."/>
            <person name="Umayam L.A."/>
            <person name="Mason T.M."/>
            <person name="Brenner M."/>
            <person name="Shea T.P."/>
            <person name="Parksey D.S."/>
            <person name="Nierman W.C."/>
            <person name="Feldblyum T.V."/>
            <person name="Hansen C.L."/>
            <person name="Craven M.B."/>
            <person name="Radune D."/>
            <person name="Vamathevan J.J."/>
            <person name="Khouri H.M."/>
            <person name="White O."/>
            <person name="Gruber T.M."/>
            <person name="Ketchum K.A."/>
            <person name="Venter J.C."/>
            <person name="Tettelin H."/>
            <person name="Bryant D.A."/>
            <person name="Fraser C.M."/>
        </authorList>
    </citation>
    <scope>NUCLEOTIDE SEQUENCE [LARGE SCALE GENOMIC DNA]</scope>
    <source>
        <strain>ATCC 49652 / DSM 12025 / NBRC 103806 / TLS</strain>
    </source>
</reference>
<feature type="chain" id="PRO_0000209387" description="D-glycero-D-manno-heptose-1,7-bisphosphate 7-phosphatase">
    <location>
        <begin position="1"/>
        <end position="199"/>
    </location>
</feature>
<feature type="active site" description="Nucleophile" evidence="1">
    <location>
        <position position="10"/>
    </location>
</feature>
<feature type="active site" description="Proton donor" evidence="1">
    <location>
        <position position="12"/>
    </location>
</feature>
<feature type="binding site" evidence="1">
    <location>
        <begin position="10"/>
        <end position="12"/>
    </location>
    <ligand>
        <name>substrate</name>
    </ligand>
</feature>
<feature type="binding site" evidence="1">
    <location>
        <position position="10"/>
    </location>
    <ligand>
        <name>Mg(2+)</name>
        <dbReference type="ChEBI" id="CHEBI:18420"/>
    </ligand>
</feature>
<feature type="binding site" evidence="1">
    <location>
        <position position="12"/>
    </location>
    <ligand>
        <name>Mg(2+)</name>
        <dbReference type="ChEBI" id="CHEBI:18420"/>
    </ligand>
</feature>
<feature type="binding site" evidence="1">
    <location>
        <begin position="18"/>
        <end position="22"/>
    </location>
    <ligand>
        <name>substrate</name>
    </ligand>
</feature>
<feature type="binding site" evidence="1">
    <location>
        <begin position="53"/>
        <end position="56"/>
    </location>
    <ligand>
        <name>substrate</name>
    </ligand>
</feature>
<feature type="binding site" evidence="1">
    <location>
        <begin position="110"/>
        <end position="111"/>
    </location>
    <ligand>
        <name>substrate</name>
    </ligand>
</feature>
<feature type="binding site" evidence="1">
    <location>
        <position position="141"/>
    </location>
    <ligand>
        <name>Mg(2+)</name>
        <dbReference type="ChEBI" id="CHEBI:18420"/>
    </ligand>
</feature>
<feature type="binding site" evidence="1">
    <location>
        <position position="142"/>
    </location>
    <ligand>
        <name>Mg(2+)</name>
        <dbReference type="ChEBI" id="CHEBI:18420"/>
    </ligand>
</feature>
<feature type="binding site" evidence="1">
    <location>
        <position position="142"/>
    </location>
    <ligand>
        <name>substrate</name>
    </ligand>
</feature>
<feature type="site" description="Stabilizes the phosphoryl group" evidence="1">
    <location>
        <position position="53"/>
    </location>
</feature>
<feature type="site" description="Contributes to substrate recognition" evidence="1">
    <location>
        <position position="110"/>
    </location>
</feature>
<feature type="site" description="Stabilizes the phosphoryl group" evidence="1">
    <location>
        <position position="111"/>
    </location>
</feature>
<sequence>MESAKVLFLDRDGTINRDIGRYVSSREEFILIDRADEAIAIAREAGFRIVLITNQAGIARGIVTPQDVEDVNDYLNELLAERQTSFDRCYYCPAHPNYPHPEYDRFIDHRKPSPRMVEQAIADLREEGFEVDRSASFFIGDKLIDVECGQRAGLKTILVRTGHNEESLCEQHQIFPDHVADDLYQAVTGYILGQPTSRD</sequence>
<gene>
    <name type="primary">gmhB</name>
    <name type="ordered locus">CT2011</name>
</gene>